<feature type="chain" id="PRO_0000047784" description="Gastrula zinc finger protein XlCGF8.2DB">
    <location>
        <begin position="1" status="less than"/>
        <end position="196" status="greater than"/>
    </location>
</feature>
<feature type="zinc finger region" description="C2H2-type 1" evidence="1">
    <location>
        <begin position="6"/>
        <end position="28"/>
    </location>
</feature>
<feature type="zinc finger region" description="C2H2-type 2" evidence="1">
    <location>
        <begin position="34"/>
        <end position="56"/>
    </location>
</feature>
<feature type="zinc finger region" description="C2H2-type 3" evidence="1">
    <location>
        <begin position="62"/>
        <end position="84"/>
    </location>
</feature>
<feature type="zinc finger region" description="C2H2-type 4" evidence="1">
    <location>
        <begin position="90"/>
        <end position="112"/>
    </location>
</feature>
<feature type="zinc finger region" description="C2H2-type 5" evidence="1">
    <location>
        <begin position="118"/>
        <end position="140"/>
    </location>
</feature>
<feature type="zinc finger region" description="C2H2-type 6" evidence="1">
    <location>
        <begin position="146"/>
        <end position="168"/>
    </location>
</feature>
<feature type="zinc finger region" description="C2H2-type 7" evidence="1">
    <location>
        <begin position="174"/>
        <end position="196"/>
    </location>
</feature>
<feature type="non-terminal residue">
    <location>
        <position position="1"/>
    </location>
</feature>
<feature type="non-terminal residue">
    <location>
        <position position="196"/>
    </location>
</feature>
<name>ZG8_XENLA</name>
<keyword id="KW-0238">DNA-binding</keyword>
<keyword id="KW-0479">Metal-binding</keyword>
<keyword id="KW-0539">Nucleus</keyword>
<keyword id="KW-1185">Reference proteome</keyword>
<keyword id="KW-0677">Repeat</keyword>
<keyword id="KW-0804">Transcription</keyword>
<keyword id="KW-0805">Transcription regulation</keyword>
<keyword id="KW-0862">Zinc</keyword>
<keyword id="KW-0863">Zinc-finger</keyword>
<reference key="1">
    <citation type="journal article" date="1989" name="J. Mol. Biol.">
        <title>Second-order repeats in Xenopus laevis finger proteins.</title>
        <authorList>
            <person name="Nietfeld W."/>
            <person name="El-Baradi T."/>
            <person name="Mentzel H."/>
            <person name="Pieler T."/>
            <person name="Koester M."/>
            <person name="Poeting A."/>
            <person name="Knoechel W."/>
        </authorList>
    </citation>
    <scope>NUCLEOTIDE SEQUENCE</scope>
</reference>
<comment type="function">
    <text>May be involved in transcriptional regulation.</text>
</comment>
<comment type="subcellular location">
    <subcellularLocation>
        <location evidence="2">Nucleus</location>
    </subcellularLocation>
</comment>
<comment type="similarity">
    <text evidence="2">Belongs to the krueppel C2H2-type zinc-finger protein family.</text>
</comment>
<dbReference type="PIR" id="S06561">
    <property type="entry name" value="S06561"/>
</dbReference>
<dbReference type="SMR" id="P18737"/>
<dbReference type="Proteomes" id="UP000186698">
    <property type="component" value="Unplaced"/>
</dbReference>
<dbReference type="GO" id="GO:0005634">
    <property type="term" value="C:nucleus"/>
    <property type="evidence" value="ECO:0007669"/>
    <property type="project" value="UniProtKB-SubCell"/>
</dbReference>
<dbReference type="GO" id="GO:0000981">
    <property type="term" value="F:DNA-binding transcription factor activity, RNA polymerase II-specific"/>
    <property type="evidence" value="ECO:0007669"/>
    <property type="project" value="TreeGrafter"/>
</dbReference>
<dbReference type="GO" id="GO:0000978">
    <property type="term" value="F:RNA polymerase II cis-regulatory region sequence-specific DNA binding"/>
    <property type="evidence" value="ECO:0007669"/>
    <property type="project" value="TreeGrafter"/>
</dbReference>
<dbReference type="GO" id="GO:0008270">
    <property type="term" value="F:zinc ion binding"/>
    <property type="evidence" value="ECO:0007669"/>
    <property type="project" value="UniProtKB-KW"/>
</dbReference>
<dbReference type="FunFam" id="3.30.160.60:FF:000065">
    <property type="entry name" value="B-cell CLL/lymphoma 6, member B"/>
    <property type="match status" value="1"/>
</dbReference>
<dbReference type="FunFam" id="3.30.160.60:FF:000097">
    <property type="entry name" value="Zinc finger protein"/>
    <property type="match status" value="1"/>
</dbReference>
<dbReference type="FunFam" id="3.30.160.60:FF:000759">
    <property type="entry name" value="zinc finger protein 16"/>
    <property type="match status" value="2"/>
</dbReference>
<dbReference type="FunFam" id="3.30.160.60:FF:002343">
    <property type="entry name" value="Zinc finger protein 33A"/>
    <property type="match status" value="1"/>
</dbReference>
<dbReference type="FunFam" id="3.30.160.60:FF:000912">
    <property type="entry name" value="Zinc finger protein 660"/>
    <property type="match status" value="1"/>
</dbReference>
<dbReference type="FunFam" id="3.30.160.60:FF:001063">
    <property type="entry name" value="zinc finger protein 746 isoform X1"/>
    <property type="match status" value="1"/>
</dbReference>
<dbReference type="Gene3D" id="3.30.160.60">
    <property type="entry name" value="Classic Zinc Finger"/>
    <property type="match status" value="7"/>
</dbReference>
<dbReference type="InterPro" id="IPR036236">
    <property type="entry name" value="Znf_C2H2_sf"/>
</dbReference>
<dbReference type="InterPro" id="IPR013087">
    <property type="entry name" value="Znf_C2H2_type"/>
</dbReference>
<dbReference type="PANTHER" id="PTHR23235:SF178">
    <property type="entry name" value="C2H2-TYPE DOMAIN-CONTAINING PROTEIN-RELATED"/>
    <property type="match status" value="1"/>
</dbReference>
<dbReference type="PANTHER" id="PTHR23235">
    <property type="entry name" value="KRUEPPEL-LIKE TRANSCRIPTION FACTOR"/>
    <property type="match status" value="1"/>
</dbReference>
<dbReference type="Pfam" id="PF00096">
    <property type="entry name" value="zf-C2H2"/>
    <property type="match status" value="7"/>
</dbReference>
<dbReference type="SMART" id="SM00355">
    <property type="entry name" value="ZnF_C2H2"/>
    <property type="match status" value="7"/>
</dbReference>
<dbReference type="SUPFAM" id="SSF57667">
    <property type="entry name" value="beta-beta-alpha zinc fingers"/>
    <property type="match status" value="4"/>
</dbReference>
<dbReference type="PROSITE" id="PS00028">
    <property type="entry name" value="ZINC_FINGER_C2H2_1"/>
    <property type="match status" value="7"/>
</dbReference>
<dbReference type="PROSITE" id="PS50157">
    <property type="entry name" value="ZINC_FINGER_C2H2_2"/>
    <property type="match status" value="7"/>
</dbReference>
<accession>P18737</accession>
<sequence>TGEKPFTCKECGKGFTQKRNLASHMTIHTGEKPFSCTECGKGFTQKRNLASHLTIHTGEKPFPCTECGKGFTQKSNLVSHMKIHTGEKPFTCTECGKEFAHKHRLLGHLKIHTGEKPFSCTECGKHFAHKYHLVSHMKIHTREKPFTCTECGEHFANKVSLLGHLKMHKGEKPFTCTECGNSFTQVSSLVSHMKIH</sequence>
<proteinExistence type="inferred from homology"/>
<organism>
    <name type="scientific">Xenopus laevis</name>
    <name type="common">African clawed frog</name>
    <dbReference type="NCBI Taxonomy" id="8355"/>
    <lineage>
        <taxon>Eukaryota</taxon>
        <taxon>Metazoa</taxon>
        <taxon>Chordata</taxon>
        <taxon>Craniata</taxon>
        <taxon>Vertebrata</taxon>
        <taxon>Euteleostomi</taxon>
        <taxon>Amphibia</taxon>
        <taxon>Batrachia</taxon>
        <taxon>Anura</taxon>
        <taxon>Pipoidea</taxon>
        <taxon>Pipidae</taxon>
        <taxon>Xenopodinae</taxon>
        <taxon>Xenopus</taxon>
        <taxon>Xenopus</taxon>
    </lineage>
</organism>
<evidence type="ECO:0000255" key="1">
    <source>
        <dbReference type="PROSITE-ProRule" id="PRU00042"/>
    </source>
</evidence>
<evidence type="ECO:0000305" key="2"/>
<protein>
    <recommendedName>
        <fullName>Gastrula zinc finger protein XlCGF8.2DB</fullName>
    </recommendedName>
</protein>